<comment type="subunit">
    <text evidence="1">Part of the 50S ribosomal subunit.</text>
</comment>
<comment type="similarity">
    <text evidence="1">Belongs to the universal ribosomal protein uL30 family.</text>
</comment>
<accession>Q21M40</accession>
<gene>
    <name evidence="1" type="primary">rpmD</name>
    <name type="ordered locus">Sde_0977</name>
</gene>
<evidence type="ECO:0000255" key="1">
    <source>
        <dbReference type="HAMAP-Rule" id="MF_01371"/>
    </source>
</evidence>
<evidence type="ECO:0000305" key="2"/>
<feature type="chain" id="PRO_0000273846" description="Large ribosomal subunit protein uL30">
    <location>
        <begin position="1"/>
        <end position="61"/>
    </location>
</feature>
<protein>
    <recommendedName>
        <fullName evidence="1">Large ribosomal subunit protein uL30</fullName>
    </recommendedName>
    <alternativeName>
        <fullName evidence="2">50S ribosomal protein L30</fullName>
    </alternativeName>
</protein>
<proteinExistence type="inferred from homology"/>
<keyword id="KW-1185">Reference proteome</keyword>
<keyword id="KW-0687">Ribonucleoprotein</keyword>
<keyword id="KW-0689">Ribosomal protein</keyword>
<sequence length="61" mass="6731">MAKKTVKVTQVKSSSGRLKAHRACISGLGLRRIGHTVEVEDTPSVRGMINKVYYMVQVEGE</sequence>
<reference key="1">
    <citation type="journal article" date="2008" name="PLoS Genet.">
        <title>Complete genome sequence of the complex carbohydrate-degrading marine bacterium, Saccharophagus degradans strain 2-40 T.</title>
        <authorList>
            <person name="Weiner R.M."/>
            <person name="Taylor L.E. II"/>
            <person name="Henrissat B."/>
            <person name="Hauser L."/>
            <person name="Land M."/>
            <person name="Coutinho P.M."/>
            <person name="Rancurel C."/>
            <person name="Saunders E.H."/>
            <person name="Longmire A.G."/>
            <person name="Zhang H."/>
            <person name="Bayer E.A."/>
            <person name="Gilbert H.J."/>
            <person name="Larimer F."/>
            <person name="Zhulin I.B."/>
            <person name="Ekborg N.A."/>
            <person name="Lamed R."/>
            <person name="Richardson P.M."/>
            <person name="Borovok I."/>
            <person name="Hutcheson S."/>
        </authorList>
    </citation>
    <scope>NUCLEOTIDE SEQUENCE [LARGE SCALE GENOMIC DNA]</scope>
    <source>
        <strain>2-40 / ATCC 43961 / DSM 17024</strain>
    </source>
</reference>
<name>RL30_SACD2</name>
<dbReference type="EMBL" id="CP000282">
    <property type="protein sequence ID" value="ABD80239.1"/>
    <property type="molecule type" value="Genomic_DNA"/>
</dbReference>
<dbReference type="RefSeq" id="WP_011467459.1">
    <property type="nucleotide sequence ID" value="NC_007912.1"/>
</dbReference>
<dbReference type="SMR" id="Q21M40"/>
<dbReference type="STRING" id="203122.Sde_0977"/>
<dbReference type="GeneID" id="98615744"/>
<dbReference type="KEGG" id="sde:Sde_0977"/>
<dbReference type="eggNOG" id="COG1841">
    <property type="taxonomic scope" value="Bacteria"/>
</dbReference>
<dbReference type="HOGENOM" id="CLU_131047_1_4_6"/>
<dbReference type="OrthoDB" id="9812790at2"/>
<dbReference type="Proteomes" id="UP000001947">
    <property type="component" value="Chromosome"/>
</dbReference>
<dbReference type="GO" id="GO:0022625">
    <property type="term" value="C:cytosolic large ribosomal subunit"/>
    <property type="evidence" value="ECO:0007669"/>
    <property type="project" value="TreeGrafter"/>
</dbReference>
<dbReference type="GO" id="GO:0003735">
    <property type="term" value="F:structural constituent of ribosome"/>
    <property type="evidence" value="ECO:0007669"/>
    <property type="project" value="InterPro"/>
</dbReference>
<dbReference type="GO" id="GO:0006412">
    <property type="term" value="P:translation"/>
    <property type="evidence" value="ECO:0007669"/>
    <property type="project" value="UniProtKB-UniRule"/>
</dbReference>
<dbReference type="CDD" id="cd01658">
    <property type="entry name" value="Ribosomal_L30"/>
    <property type="match status" value="1"/>
</dbReference>
<dbReference type="FunFam" id="3.30.1390.20:FF:000001">
    <property type="entry name" value="50S ribosomal protein L30"/>
    <property type="match status" value="1"/>
</dbReference>
<dbReference type="Gene3D" id="3.30.1390.20">
    <property type="entry name" value="Ribosomal protein L30, ferredoxin-like fold domain"/>
    <property type="match status" value="1"/>
</dbReference>
<dbReference type="HAMAP" id="MF_01371_B">
    <property type="entry name" value="Ribosomal_uL30_B"/>
    <property type="match status" value="1"/>
</dbReference>
<dbReference type="InterPro" id="IPR036919">
    <property type="entry name" value="Ribo_uL30_ferredoxin-like_sf"/>
</dbReference>
<dbReference type="InterPro" id="IPR005996">
    <property type="entry name" value="Ribosomal_uL30_bac-type"/>
</dbReference>
<dbReference type="InterPro" id="IPR016082">
    <property type="entry name" value="Ribosomal_uL30_ferredoxin-like"/>
</dbReference>
<dbReference type="NCBIfam" id="TIGR01308">
    <property type="entry name" value="rpmD_bact"/>
    <property type="match status" value="1"/>
</dbReference>
<dbReference type="PANTHER" id="PTHR15892:SF2">
    <property type="entry name" value="LARGE RIBOSOMAL SUBUNIT PROTEIN UL30M"/>
    <property type="match status" value="1"/>
</dbReference>
<dbReference type="PANTHER" id="PTHR15892">
    <property type="entry name" value="MITOCHONDRIAL RIBOSOMAL PROTEIN L30"/>
    <property type="match status" value="1"/>
</dbReference>
<dbReference type="Pfam" id="PF00327">
    <property type="entry name" value="Ribosomal_L30"/>
    <property type="match status" value="1"/>
</dbReference>
<dbReference type="PIRSF" id="PIRSF002211">
    <property type="entry name" value="Ribosomal_L30_bac-type"/>
    <property type="match status" value="1"/>
</dbReference>
<dbReference type="SUPFAM" id="SSF55129">
    <property type="entry name" value="Ribosomal protein L30p/L7e"/>
    <property type="match status" value="1"/>
</dbReference>
<organism>
    <name type="scientific">Saccharophagus degradans (strain 2-40 / ATCC 43961 / DSM 17024)</name>
    <dbReference type="NCBI Taxonomy" id="203122"/>
    <lineage>
        <taxon>Bacteria</taxon>
        <taxon>Pseudomonadati</taxon>
        <taxon>Pseudomonadota</taxon>
        <taxon>Gammaproteobacteria</taxon>
        <taxon>Cellvibrionales</taxon>
        <taxon>Cellvibrionaceae</taxon>
        <taxon>Saccharophagus</taxon>
    </lineage>
</organism>